<feature type="signal peptide" evidence="3">
    <location>
        <begin position="1"/>
        <end position="50"/>
    </location>
</feature>
<feature type="chain" id="PRO_0000149597" description="Outer capsid glycoprotein VP7" evidence="3">
    <location>
        <begin position="51"/>
        <end position="326"/>
    </location>
</feature>
<feature type="region of interest" description="CNP motif; interaction with ITGAV/ITGB3" evidence="3">
    <location>
        <begin position="165"/>
        <end position="167"/>
    </location>
</feature>
<feature type="region of interest" description="GPR motif; interaction with ITGAX/ITGB2" evidence="3">
    <location>
        <begin position="253"/>
        <end position="255"/>
    </location>
</feature>
<feature type="binding site" evidence="3">
    <location>
        <position position="95"/>
    </location>
    <ligand>
        <name>Ca(2+)</name>
        <dbReference type="ChEBI" id="CHEBI:29108"/>
        <label>1</label>
    </ligand>
</feature>
<feature type="binding site" evidence="3">
    <location>
        <position position="177"/>
    </location>
    <ligand>
        <name>Ca(2+)</name>
        <dbReference type="ChEBI" id="CHEBI:29108"/>
        <label>2</label>
    </ligand>
</feature>
<feature type="binding site" evidence="3">
    <location>
        <position position="206"/>
    </location>
    <ligand>
        <name>Ca(2+)</name>
        <dbReference type="ChEBI" id="CHEBI:29108"/>
        <label>1</label>
    </ligand>
</feature>
<feature type="binding site" evidence="3">
    <location>
        <position position="214"/>
    </location>
    <ligand>
        <name>Ca(2+)</name>
        <dbReference type="ChEBI" id="CHEBI:29108"/>
        <label>1</label>
    </ligand>
</feature>
<feature type="binding site" evidence="3">
    <location>
        <position position="216"/>
    </location>
    <ligand>
        <name>Ca(2+)</name>
        <dbReference type="ChEBI" id="CHEBI:29108"/>
        <label>1</label>
    </ligand>
</feature>
<feature type="binding site" evidence="3">
    <location>
        <position position="228"/>
    </location>
    <ligand>
        <name>Ca(2+)</name>
        <dbReference type="ChEBI" id="CHEBI:29108"/>
        <label>2</label>
    </ligand>
</feature>
<feature type="binding site" evidence="3">
    <location>
        <position position="229"/>
    </location>
    <ligand>
        <name>Ca(2+)</name>
        <dbReference type="ChEBI" id="CHEBI:29108"/>
        <label>2</label>
    </ligand>
</feature>
<feature type="binding site" evidence="3">
    <location>
        <position position="301"/>
    </location>
    <ligand>
        <name>Ca(2+)</name>
        <dbReference type="ChEBI" id="CHEBI:29108"/>
        <label>2</label>
    </ligand>
</feature>
<feature type="glycosylation site" description="N-linked (GlcNAc...) asparagine; by host" evidence="2">
    <location>
        <position position="69"/>
    </location>
</feature>
<feature type="glycosylation site" description="N-linked (GlcNAc...) asparagine; by host" evidence="2">
    <location>
        <position position="146"/>
    </location>
</feature>
<feature type="glycosylation site" description="N-linked (GlcNAc...) asparagine; by host" evidence="2">
    <location>
        <position position="238"/>
    </location>
</feature>
<feature type="disulfide bond" evidence="3">
    <location>
        <begin position="82"/>
        <end position="135"/>
    </location>
</feature>
<feature type="disulfide bond" evidence="3">
    <location>
        <begin position="165"/>
        <end position="249"/>
    </location>
</feature>
<feature type="disulfide bond" evidence="3">
    <location>
        <begin position="191"/>
        <end position="244"/>
    </location>
</feature>
<feature type="disulfide bond" evidence="3">
    <location>
        <begin position="196"/>
        <end position="207"/>
    </location>
</feature>
<feature type="splice variant" id="VSP_038629" description="In isoform 2." evidence="5">
    <location>
        <begin position="1"/>
        <end position="29"/>
    </location>
</feature>
<evidence type="ECO:0000250" key="1"/>
<evidence type="ECO:0000255" key="2"/>
<evidence type="ECO:0000255" key="3">
    <source>
        <dbReference type="HAMAP-Rule" id="MF_04131"/>
    </source>
</evidence>
<evidence type="ECO:0000303" key="4">
    <source>
    </source>
</evidence>
<evidence type="ECO:0000305" key="5"/>
<keyword id="KW-0024">Alternative initiation</keyword>
<keyword id="KW-0106">Calcium</keyword>
<keyword id="KW-0167">Capsid protein</keyword>
<keyword id="KW-1015">Disulfide bond</keyword>
<keyword id="KW-0325">Glycoprotein</keyword>
<keyword id="KW-1038">Host endoplasmic reticulum</keyword>
<keyword id="KW-0945">Host-virus interaction</keyword>
<keyword id="KW-0479">Metal-binding</keyword>
<keyword id="KW-1152">Outer capsid protein</keyword>
<keyword id="KW-0732">Signal</keyword>
<keyword id="KW-1146">T=13 icosahedral capsid protein</keyword>
<keyword id="KW-0946">Virion</keyword>
<organismHost>
    <name type="scientific">Homo sapiens</name>
    <name type="common">Human</name>
    <dbReference type="NCBI Taxonomy" id="9606"/>
</organismHost>
<sequence>MYGIEYTTILTILISIILLNYILKTITNTMDYIIFRFLLLIALISPFVRTQNYGMYLPITGSLDAVYTNSTSGEPFLTSTLCLYYPAEAKNEISDDEWENTLSQLFLTKGWPIGSVYFKDYNDINTFSVNPQLYCDYNVVLMRYDNTSELDASELADLILNEWLCNPMDISLYYYQQSSESNKWISMGTDCTVKVCPLNTQTLGIGCKTTDVNTFEIVASSEKLVITDVVNGVNHKINISINTCTIRNCNKLGPRENVAIIQVGGPNALDITADPTTVPQVQRIMRINWKKWWQVFYTVVDYINQVIQVMSKRSRSLDAAAFYYRI</sequence>
<accession>P11850</accession>
<accession>Q761X8</accession>
<comment type="function">
    <text evidence="3">Calcium-binding protein that interacts with rotavirus cell receptors once the initial attachment by VP4 has been achieved. Rotavirus attachment and entry into the host cell probably involves multiple sequential contacts between the outer capsid proteins VP4 and VP7, and the cell receptors. Following entry into the host cell, low intracellular or intravesicular Ca(2+) concentration probably causes the calcium-stabilized VP7 trimers to dissociate from the virion. This step is probably necessary for the membrane-disrupting entry step and the release of VP4, which is locked onto the virion by VP7.</text>
</comment>
<comment type="subunit">
    <text evidence="3">Homotrimer; disulfide-linked. 2 Ca(2+) ions bound at each subunit interface in the trimer hold the trimer together. Interacts with the intermediate capsid protein VP6. Interacts with the outer capsid protein VP5*.</text>
</comment>
<comment type="subcellular location">
    <subcellularLocation>
        <location evidence="3">Virion</location>
    </subcellularLocation>
    <subcellularLocation>
        <location evidence="3">Host endoplasmic reticulum lumen</location>
    </subcellularLocation>
    <text evidence="3">The outer layer contains 780 copies of VP7, grouped as 260 trimers. Immature double-layered particles assembled in the cytoplasm bud across the membrane of the endoplasmic reticulum, acquiring during this process a transient lipid membrane that is modified with the ER resident viral glycoproteins NSP4 and VP7; these enveloped particles also contain VP4. As the particles move towards the interior of the ER. cisternae, the transient lipid membrane and the non-structural protein NSP4 are lost, while the virus surface proteins VP4 and VP7 rearrange to form the outermost virus protein layer, yielding mature infectious triple-layered particles.</text>
</comment>
<comment type="alternative products">
    <event type="alternative initiation"/>
    <isoform>
        <id>P11850-1</id>
        <name>1</name>
        <sequence type="displayed"/>
    </isoform>
    <isoform>
        <id>P11850-2</id>
        <name>2</name>
        <sequence type="described" ref="VSP_038629"/>
    </isoform>
</comment>
<comment type="PTM">
    <text evidence="1">Intramolecular disulfide bonds.</text>
</comment>
<comment type="PTM">
    <text evidence="3">N-glycosylated.</text>
</comment>
<comment type="PTM">
    <text evidence="3">The N-terminus is blocked possibly by pyroglutamic acid.</text>
</comment>
<comment type="miscellaneous">
    <text evidence="3 4">Some rotavirus strains are neuraminidase-sensitive and require sialic acid to attach to the cell surface. Some rotavirus strains are integrin-dependent. Some rotavirus strains depend on ganglioside for their entry into the host cell. Hsp70 also seems to be involved in the entry of some strains.</text>
</comment>
<comment type="miscellaneous">
    <text evidence="3">In group A rotaviruses, VP7 defines the G serotype.</text>
</comment>
<comment type="miscellaneous">
    <molecule>Isoform 2</molecule>
    <text evidence="5">Produced by alternative initiation at Met-30 of isoform 1.</text>
</comment>
<comment type="similarity">
    <text evidence="3">Belongs to the rotavirus VP7 family.</text>
</comment>
<name>VP7_ROTHD</name>
<reference key="1">
    <citation type="journal article" date="1987" name="Virology">
        <title>Comparison of the amino acid sequences of the major neutralization protein of four human rotavirus serotypes.</title>
        <authorList>
            <person name="Green K.Y."/>
            <person name="Midthun K."/>
            <person name="Gorziglia M."/>
            <person name="Hoshino Y."/>
            <person name="Kapikian A.Z."/>
            <person name="Chanock R.M."/>
            <person name="Flores J."/>
        </authorList>
    </citation>
    <scope>NUCLEOTIDE SEQUENCE</scope>
</reference>
<reference key="2">
    <citation type="journal article" date="2008" name="J. Virol.">
        <title>Group A human rotavirus genomics: evidence that gene constellations are influenced by viral protein interactions.</title>
        <authorList>
            <person name="Heiman E.M."/>
            <person name="McDonald S.M."/>
            <person name="Barro M."/>
            <person name="Taraporewala Z.F."/>
            <person name="Bar-Magen T."/>
            <person name="Patton J.T."/>
        </authorList>
    </citation>
    <scope>NUCLEOTIDE SEQUENCE [GENOMIC RNA]</scope>
</reference>
<reference key="3">
    <citation type="submission" date="2003-08" db="EMBL/GenBank/DDBJ databases">
        <title>VP7 sequences in human rotavirus strains.</title>
        <authorList>
            <person name="Homma S."/>
            <person name="Hoshino Y."/>
        </authorList>
    </citation>
    <scope>NUCLEOTIDE SEQUENCE [GENOMIC RNA]</scope>
</reference>
<reference key="4">
    <citation type="journal article" date="2004" name="Trends Microbiol.">
        <title>Multistep entry of rotavirus into cells: a Versaillesque dance.</title>
        <authorList>
            <person name="Lopez S."/>
            <person name="Arias C.F."/>
        </authorList>
    </citation>
    <scope>REVIEW</scope>
</reference>
<proteinExistence type="inferred from homology"/>
<dbReference type="EMBL" id="EF672581">
    <property type="protein sequence ID" value="ABV53256.1"/>
    <property type="molecule type" value="Genomic_RNA"/>
</dbReference>
<dbReference type="EMBL" id="AB118023">
    <property type="protein sequence ID" value="BAC82356.1"/>
    <property type="molecule type" value="Genomic_RNA"/>
</dbReference>
<dbReference type="PIR" id="E27620">
    <property type="entry name" value="VGXRDS"/>
</dbReference>
<dbReference type="SMR" id="P11850"/>
<dbReference type="ABCD" id="P11850">
    <property type="antibodies" value="2 sequenced antibodies"/>
</dbReference>
<dbReference type="Proteomes" id="UP000001457">
    <property type="component" value="Genome"/>
</dbReference>
<dbReference type="GO" id="GO:0044166">
    <property type="term" value="C:host cell endoplasmic reticulum lumen"/>
    <property type="evidence" value="ECO:0007669"/>
    <property type="project" value="UniProtKB-SubCell"/>
</dbReference>
<dbReference type="GO" id="GO:0039621">
    <property type="term" value="C:T=13 icosahedral viral capsid"/>
    <property type="evidence" value="ECO:0007669"/>
    <property type="project" value="UniProtKB-UniRule"/>
</dbReference>
<dbReference type="GO" id="GO:0039624">
    <property type="term" value="C:viral outer capsid"/>
    <property type="evidence" value="ECO:0007669"/>
    <property type="project" value="UniProtKB-UniRule"/>
</dbReference>
<dbReference type="GO" id="GO:0046872">
    <property type="term" value="F:metal ion binding"/>
    <property type="evidence" value="ECO:0007669"/>
    <property type="project" value="UniProtKB-KW"/>
</dbReference>
<dbReference type="Gene3D" id="3.40.50.11130">
    <property type="entry name" value="Glycoprotein VP7, domain 1"/>
    <property type="match status" value="1"/>
</dbReference>
<dbReference type="Gene3D" id="2.60.120.800">
    <property type="entry name" value="Rotavirus outer-layer protein VP7, domain 2"/>
    <property type="match status" value="1"/>
</dbReference>
<dbReference type="HAMAP" id="MF_04130">
    <property type="entry name" value="Rota_VP7"/>
    <property type="match status" value="1"/>
</dbReference>
<dbReference type="HAMAP" id="MF_04131">
    <property type="entry name" value="Rota_VP7_A"/>
    <property type="match status" value="1"/>
</dbReference>
<dbReference type="InterPro" id="IPR001963">
    <property type="entry name" value="VP7"/>
</dbReference>
<dbReference type="InterPro" id="IPR042207">
    <property type="entry name" value="VP7_1"/>
</dbReference>
<dbReference type="InterPro" id="IPR042210">
    <property type="entry name" value="VP7_2"/>
</dbReference>
<dbReference type="Pfam" id="PF00434">
    <property type="entry name" value="VP7"/>
    <property type="match status" value="1"/>
</dbReference>
<protein>
    <recommendedName>
        <fullName evidence="3">Outer capsid glycoprotein VP7</fullName>
    </recommendedName>
</protein>
<organism>
    <name type="scientific">Rotavirus A (strain RVA/Human/United States/DS-1/1976/G2P1B[4])</name>
    <name type="common">RV-A</name>
    <name type="synonym">Rotavirus A (strain DS1)</name>
    <dbReference type="NCBI Taxonomy" id="10950"/>
    <lineage>
        <taxon>Viruses</taxon>
        <taxon>Riboviria</taxon>
        <taxon>Orthornavirae</taxon>
        <taxon>Duplornaviricota</taxon>
        <taxon>Resentoviricetes</taxon>
        <taxon>Reovirales</taxon>
        <taxon>Sedoreoviridae</taxon>
        <taxon>Rotavirus</taxon>
        <taxon>Rotavirus A</taxon>
    </lineage>
</organism>